<evidence type="ECO:0000250" key="1"/>
<evidence type="ECO:0000256" key="2">
    <source>
        <dbReference type="SAM" id="MobiDB-lite"/>
    </source>
</evidence>
<evidence type="ECO:0000305" key="3"/>
<comment type="function">
    <text evidence="1">Required for normal Golgi function.</text>
</comment>
<comment type="subunit">
    <text evidence="1">Component of the conserved oligomeric Golgi complex which is composed of eight different subunits and is required for normal Golgi morphology and localization.</text>
</comment>
<comment type="subcellular location">
    <subcellularLocation>
        <location evidence="1">Golgi apparatus membrane</location>
        <topology evidence="1">Peripheral membrane protein</topology>
    </subcellularLocation>
</comment>
<comment type="similarity">
    <text evidence="3">Belongs to the COG8 family.</text>
</comment>
<feature type="chain" id="PRO_0000341685" description="Conserved oligomeric Golgi complex subunit 8">
    <location>
        <begin position="1"/>
        <end position="779"/>
    </location>
</feature>
<feature type="region of interest" description="Disordered" evidence="2">
    <location>
        <begin position="1"/>
        <end position="36"/>
    </location>
</feature>
<feature type="region of interest" description="Disordered" evidence="2">
    <location>
        <begin position="328"/>
        <end position="349"/>
    </location>
</feature>
<feature type="region of interest" description="Disordered" evidence="2">
    <location>
        <begin position="512"/>
        <end position="691"/>
    </location>
</feature>
<feature type="compositionally biased region" description="Low complexity" evidence="2">
    <location>
        <begin position="8"/>
        <end position="36"/>
    </location>
</feature>
<feature type="compositionally biased region" description="Low complexity" evidence="2">
    <location>
        <begin position="330"/>
        <end position="349"/>
    </location>
</feature>
<feature type="compositionally biased region" description="Low complexity" evidence="2">
    <location>
        <begin position="533"/>
        <end position="543"/>
    </location>
</feature>
<feature type="compositionally biased region" description="Pro residues" evidence="2">
    <location>
        <begin position="544"/>
        <end position="560"/>
    </location>
</feature>
<feature type="compositionally biased region" description="Low complexity" evidence="2">
    <location>
        <begin position="561"/>
        <end position="640"/>
    </location>
</feature>
<feature type="compositionally biased region" description="Basic and acidic residues" evidence="2">
    <location>
        <begin position="641"/>
        <end position="658"/>
    </location>
</feature>
<feature type="compositionally biased region" description="Low complexity" evidence="2">
    <location>
        <begin position="675"/>
        <end position="690"/>
    </location>
</feature>
<gene>
    <name type="primary">cog8</name>
    <name type="ORF">DDB_G0271388</name>
</gene>
<proteinExistence type="inferred from homology"/>
<organism>
    <name type="scientific">Dictyostelium discoideum</name>
    <name type="common">Social amoeba</name>
    <dbReference type="NCBI Taxonomy" id="44689"/>
    <lineage>
        <taxon>Eukaryota</taxon>
        <taxon>Amoebozoa</taxon>
        <taxon>Evosea</taxon>
        <taxon>Eumycetozoa</taxon>
        <taxon>Dictyostelia</taxon>
        <taxon>Dictyosteliales</taxon>
        <taxon>Dictyosteliaceae</taxon>
        <taxon>Dictyostelium</taxon>
    </lineage>
</organism>
<accession>Q55BB8</accession>
<name>COG8_DICDI</name>
<reference key="1">
    <citation type="journal article" date="2002" name="Nature">
        <title>Sequence and analysis of chromosome 2 of Dictyostelium discoideum.</title>
        <authorList>
            <person name="Gloeckner G."/>
            <person name="Eichinger L."/>
            <person name="Szafranski K."/>
            <person name="Pachebat J.A."/>
            <person name="Bankier A.T."/>
            <person name="Dear P.H."/>
            <person name="Lehmann R."/>
            <person name="Baumgart C."/>
            <person name="Parra G."/>
            <person name="Abril J.F."/>
            <person name="Guigo R."/>
            <person name="Kumpf K."/>
            <person name="Tunggal B."/>
            <person name="Cox E.C."/>
            <person name="Quail M.A."/>
            <person name="Platzer M."/>
            <person name="Rosenthal A."/>
            <person name="Noegel A.A."/>
        </authorList>
    </citation>
    <scope>NUCLEOTIDE SEQUENCE [LARGE SCALE GENOMIC DNA]</scope>
    <source>
        <strain>AX4</strain>
    </source>
</reference>
<reference key="2">
    <citation type="journal article" date="2005" name="Nature">
        <title>The genome of the social amoeba Dictyostelium discoideum.</title>
        <authorList>
            <person name="Eichinger L."/>
            <person name="Pachebat J.A."/>
            <person name="Gloeckner G."/>
            <person name="Rajandream M.A."/>
            <person name="Sucgang R."/>
            <person name="Berriman M."/>
            <person name="Song J."/>
            <person name="Olsen R."/>
            <person name="Szafranski K."/>
            <person name="Xu Q."/>
            <person name="Tunggal B."/>
            <person name="Kummerfeld S."/>
            <person name="Madera M."/>
            <person name="Konfortov B.A."/>
            <person name="Rivero F."/>
            <person name="Bankier A.T."/>
            <person name="Lehmann R."/>
            <person name="Hamlin N."/>
            <person name="Davies R."/>
            <person name="Gaudet P."/>
            <person name="Fey P."/>
            <person name="Pilcher K."/>
            <person name="Chen G."/>
            <person name="Saunders D."/>
            <person name="Sodergren E.J."/>
            <person name="Davis P."/>
            <person name="Kerhornou A."/>
            <person name="Nie X."/>
            <person name="Hall N."/>
            <person name="Anjard C."/>
            <person name="Hemphill L."/>
            <person name="Bason N."/>
            <person name="Farbrother P."/>
            <person name="Desany B."/>
            <person name="Just E."/>
            <person name="Morio T."/>
            <person name="Rost R."/>
            <person name="Churcher C.M."/>
            <person name="Cooper J."/>
            <person name="Haydock S."/>
            <person name="van Driessche N."/>
            <person name="Cronin A."/>
            <person name="Goodhead I."/>
            <person name="Muzny D.M."/>
            <person name="Mourier T."/>
            <person name="Pain A."/>
            <person name="Lu M."/>
            <person name="Harper D."/>
            <person name="Lindsay R."/>
            <person name="Hauser H."/>
            <person name="James K.D."/>
            <person name="Quiles M."/>
            <person name="Madan Babu M."/>
            <person name="Saito T."/>
            <person name="Buchrieser C."/>
            <person name="Wardroper A."/>
            <person name="Felder M."/>
            <person name="Thangavelu M."/>
            <person name="Johnson D."/>
            <person name="Knights A."/>
            <person name="Loulseged H."/>
            <person name="Mungall K.L."/>
            <person name="Oliver K."/>
            <person name="Price C."/>
            <person name="Quail M.A."/>
            <person name="Urushihara H."/>
            <person name="Hernandez J."/>
            <person name="Rabbinowitsch E."/>
            <person name="Steffen D."/>
            <person name="Sanders M."/>
            <person name="Ma J."/>
            <person name="Kohara Y."/>
            <person name="Sharp S."/>
            <person name="Simmonds M.N."/>
            <person name="Spiegler S."/>
            <person name="Tivey A."/>
            <person name="Sugano S."/>
            <person name="White B."/>
            <person name="Walker D."/>
            <person name="Woodward J.R."/>
            <person name="Winckler T."/>
            <person name="Tanaka Y."/>
            <person name="Shaulsky G."/>
            <person name="Schleicher M."/>
            <person name="Weinstock G.M."/>
            <person name="Rosenthal A."/>
            <person name="Cox E.C."/>
            <person name="Chisholm R.L."/>
            <person name="Gibbs R.A."/>
            <person name="Loomis W.F."/>
            <person name="Platzer M."/>
            <person name="Kay R.R."/>
            <person name="Williams J.G."/>
            <person name="Dear P.H."/>
            <person name="Noegel A.A."/>
            <person name="Barrell B.G."/>
            <person name="Kuspa A."/>
        </authorList>
    </citation>
    <scope>NUCLEOTIDE SEQUENCE [LARGE SCALE GENOMIC DNA]</scope>
    <source>
        <strain>AX4</strain>
    </source>
</reference>
<keyword id="KW-0333">Golgi apparatus</keyword>
<keyword id="KW-0472">Membrane</keyword>
<keyword id="KW-0653">Protein transport</keyword>
<keyword id="KW-1185">Reference proteome</keyword>
<keyword id="KW-0813">Transport</keyword>
<sequence>MSKVNTDENNFINNNNSNNNINNNDNNDNNNNNIQNVSNQIENGLLSNLPTISSSCESFSSKSHSLTERRSSIKNLLDNFSTLLDILEIPQLMDTCIKNNSFDEALQLESFAKKIYKQYSNNTVIIEIIKEIKVCTRSLISTLQQQLRQDITLTNCIKTIGYLRRLSIYKENELKIIFLHSRDQWLINSLKFDITNSNHVTYLTKLTDSCRTNIFDIVTQYNAIFSNESNDEDQLDDLILYNWIQQKIKVYINIVDSTLNHIKSGSSISYVLENSMYFSMSISRVGIDFRNLLEPIFEKHILNNFLSQITTANHHFLETLKTYKFPLQKSTSPTSSTTSTSSSSSSSSSSQYISPPLSILQHQPLAVLVNLILKSFNELKDCFPISLRSIVILKLKELIISIVGGVTSFYNQLLSNTISNLINSPSTTTTTTTTTITSSFDKVFHSFCKCLAEDFIPFIVKCFDIICSQQLQQQQQINDGSSSSSSSNSIGIDVDSLVLSLKKIYSTETQTIPSTQNNNLPPIPDLVLRGNKNSSPSTTTTPTTPTPTPTPTPTPTPTTPTTPTITHSTPPSPLPSSTTTQLNSNNNNNDNNNNNNNNNNNNNNNNNNNNNNNNNNNNNNNNNNNNNNNNNNNNNNNNNNTDKKVDERKEENIIKEEEQPISTSTANKNDIAIETITTPSSFSSSSSTNTKSDEEIIDKIVQPDPVVVEKQENEITNILKDDNETTTDILTDNNEATTEIQNNDQSLNPDPIIQEIEDTPSEVIVNNNNNNNDDDDTTF</sequence>
<protein>
    <recommendedName>
        <fullName>Conserved oligomeric Golgi complex subunit 8</fullName>
        <shortName>COG complex subunit 8</shortName>
    </recommendedName>
    <alternativeName>
        <fullName>Component of oligomeric Golgi complex 8</fullName>
    </alternativeName>
</protein>
<dbReference type="EMBL" id="AAFI02000006">
    <property type="protein sequence ID" value="EAL71824.1"/>
    <property type="molecule type" value="Genomic_DNA"/>
</dbReference>
<dbReference type="RefSeq" id="XP_645694.1">
    <property type="nucleotide sequence ID" value="XM_640602.1"/>
</dbReference>
<dbReference type="SMR" id="Q55BB8"/>
<dbReference type="FunCoup" id="Q55BB8">
    <property type="interactions" value="163"/>
</dbReference>
<dbReference type="STRING" id="44689.Q55BB8"/>
<dbReference type="GlyGen" id="Q55BB8">
    <property type="glycosylation" value="6 sites"/>
</dbReference>
<dbReference type="PaxDb" id="44689-DDB0216803"/>
<dbReference type="EnsemblProtists" id="EAL71824">
    <property type="protein sequence ID" value="EAL71824"/>
    <property type="gene ID" value="DDB_G0271388"/>
</dbReference>
<dbReference type="GeneID" id="8617887"/>
<dbReference type="KEGG" id="ddi:DDB_G0271388"/>
<dbReference type="dictyBase" id="DDB_G0271388">
    <property type="gene designation" value="cog8"/>
</dbReference>
<dbReference type="VEuPathDB" id="AmoebaDB:DDB_G0271388"/>
<dbReference type="eggNOG" id="KOG2069">
    <property type="taxonomic scope" value="Eukaryota"/>
</dbReference>
<dbReference type="HOGENOM" id="CLU_359617_0_0_1"/>
<dbReference type="InParanoid" id="Q55BB8"/>
<dbReference type="OMA" id="CTENNEN"/>
<dbReference type="PhylomeDB" id="Q55BB8"/>
<dbReference type="Reactome" id="R-DDI-6807878">
    <property type="pathway name" value="COPI-mediated anterograde transport"/>
</dbReference>
<dbReference type="Reactome" id="R-DDI-6811438">
    <property type="pathway name" value="Intra-Golgi traffic"/>
</dbReference>
<dbReference type="PRO" id="PR:Q55BB8"/>
<dbReference type="Proteomes" id="UP000002195">
    <property type="component" value="Chromosome 2"/>
</dbReference>
<dbReference type="GO" id="GO:0000139">
    <property type="term" value="C:Golgi membrane"/>
    <property type="evidence" value="ECO:0007669"/>
    <property type="project" value="UniProtKB-SubCell"/>
</dbReference>
<dbReference type="GO" id="GO:0017119">
    <property type="term" value="C:Golgi transport complex"/>
    <property type="evidence" value="ECO:0000318"/>
    <property type="project" value="GO_Central"/>
</dbReference>
<dbReference type="GO" id="GO:0006891">
    <property type="term" value="P:intra-Golgi vesicle-mediated transport"/>
    <property type="evidence" value="ECO:0000318"/>
    <property type="project" value="GO_Central"/>
</dbReference>
<dbReference type="GO" id="GO:0015031">
    <property type="term" value="P:protein transport"/>
    <property type="evidence" value="ECO:0007669"/>
    <property type="project" value="UniProtKB-KW"/>
</dbReference>
<dbReference type="InterPro" id="IPR007255">
    <property type="entry name" value="COG8"/>
</dbReference>
<dbReference type="InterPro" id="IPR016159">
    <property type="entry name" value="Cullin_repeat-like_dom_sf"/>
</dbReference>
<dbReference type="PANTHER" id="PTHR21311">
    <property type="entry name" value="CONSERVED OLIGOMERIC GOLGI COMPLEX COMPONENT 8"/>
    <property type="match status" value="1"/>
</dbReference>
<dbReference type="PANTHER" id="PTHR21311:SF0">
    <property type="entry name" value="CONSERVED OLIGOMERIC GOLGI COMPLEX SUBUNIT 8"/>
    <property type="match status" value="1"/>
</dbReference>
<dbReference type="Pfam" id="PF04124">
    <property type="entry name" value="Dor1"/>
    <property type="match status" value="1"/>
</dbReference>
<dbReference type="SUPFAM" id="SSF74788">
    <property type="entry name" value="Cullin repeat-like"/>
    <property type="match status" value="1"/>
</dbReference>